<sequence>MDSSGGFQKHTCGHALLLLLLLLAGGAEAFRICAFNAQRLTLAKVAREYVMDTLVRILARCDITVLQEVVDSTGSAIPLLLRELNRFDGSGPYSSLSSPLLGRGAYKEKYAYIYRSHRTQVLNFYLYPDEDDLFAREPFVGQFSLPSKVLPSLVLVPLHTTPKAVEPELKALYEVFLDVSQRWQSEDVILLGDFNADCASLTKKRLDELVLRTQAGFHWAVADGVDTTVRASTHCTYDRIVLHGERLQSLLRNAGAFDFPQSFGLTEEEALNISDHYPVEVELSRAVHRIQPLSLATLLLSLLLLLLSPQLGLAA</sequence>
<comment type="subcellular location">
    <subcellularLocation>
        <location evidence="1">Endoplasmic reticulum</location>
    </subcellularLocation>
</comment>
<comment type="similarity">
    <text evidence="3">Belongs to the DNase I family.</text>
</comment>
<name>DNSL1_PIG</name>
<evidence type="ECO:0000250" key="1"/>
<evidence type="ECO:0000255" key="2"/>
<evidence type="ECO:0000305" key="3"/>
<organism>
    <name type="scientific">Sus scrofa</name>
    <name type="common">Pig</name>
    <dbReference type="NCBI Taxonomy" id="9823"/>
    <lineage>
        <taxon>Eukaryota</taxon>
        <taxon>Metazoa</taxon>
        <taxon>Chordata</taxon>
        <taxon>Craniata</taxon>
        <taxon>Vertebrata</taxon>
        <taxon>Euteleostomi</taxon>
        <taxon>Mammalia</taxon>
        <taxon>Eutheria</taxon>
        <taxon>Laurasiatheria</taxon>
        <taxon>Artiodactyla</taxon>
        <taxon>Suina</taxon>
        <taxon>Suidae</taxon>
        <taxon>Sus</taxon>
    </lineage>
</organism>
<protein>
    <recommendedName>
        <fullName>Deoxyribonuclease-1-like 1</fullName>
        <ecNumber>3.1.21.-</ecNumber>
    </recommendedName>
    <alternativeName>
        <fullName>DNase X</fullName>
    </alternativeName>
    <alternativeName>
        <fullName>Deoxyribonuclease I-like 1</fullName>
        <shortName>DNase I-like 1</shortName>
    </alternativeName>
</protein>
<reference key="1">
    <citation type="journal article" date="2005" name="Biochem. J.">
        <title>Physical and biochemical properties of mammalian DNase X proteins: non-AUG translation initiation of porcine and bovine mRNAs for DNase X.</title>
        <authorList>
            <person name="Shiokawa D."/>
            <person name="Shika Y."/>
            <person name="Saito K."/>
            <person name="Yamazaki K."/>
            <person name="Tanuma S."/>
        </authorList>
    </citation>
    <scope>NUCLEOTIDE SEQUENCE [MRNA]</scope>
</reference>
<keyword id="KW-1015">Disulfide bond</keyword>
<keyword id="KW-0255">Endonuclease</keyword>
<keyword id="KW-0256">Endoplasmic reticulum</keyword>
<keyword id="KW-0325">Glycoprotein</keyword>
<keyword id="KW-0378">Hydrolase</keyword>
<keyword id="KW-0540">Nuclease</keyword>
<keyword id="KW-1185">Reference proteome</keyword>
<keyword id="KW-0732">Signal</keyword>
<proteinExistence type="evidence at transcript level"/>
<feature type="signal peptide" evidence="2">
    <location>
        <begin position="1"/>
        <end position="29"/>
    </location>
</feature>
<feature type="chain" id="PRO_0000231033" description="Deoxyribonuclease-1-like 1">
    <location>
        <begin position="30"/>
        <end position="315"/>
    </location>
</feature>
<feature type="active site" evidence="1">
    <location>
        <position position="108"/>
    </location>
</feature>
<feature type="active site" evidence="1">
    <location>
        <position position="159"/>
    </location>
</feature>
<feature type="glycosylation site" description="N-linked (GlcNAc...) asparagine" evidence="2">
    <location>
        <position position="272"/>
    </location>
</feature>
<feature type="disulfide bond" description="Essential for enzymatic activity" evidence="1">
    <location>
        <begin position="198"/>
        <end position="235"/>
    </location>
</feature>
<dbReference type="EC" id="3.1.21.-"/>
<dbReference type="EMBL" id="DQ116782">
    <property type="protein sequence ID" value="AAZ94275.1"/>
    <property type="molecule type" value="mRNA"/>
</dbReference>
<dbReference type="RefSeq" id="NP_001033721.1">
    <property type="nucleotide sequence ID" value="NM_001038632.1"/>
</dbReference>
<dbReference type="SMR" id="Q2QDF0"/>
<dbReference type="FunCoup" id="Q2QDF0">
    <property type="interactions" value="134"/>
</dbReference>
<dbReference type="STRING" id="9823.ENSSSCP00000056134"/>
<dbReference type="GlyCosmos" id="Q2QDF0">
    <property type="glycosylation" value="1 site, No reported glycans"/>
</dbReference>
<dbReference type="GlyGen" id="Q2QDF0">
    <property type="glycosylation" value="1 site"/>
</dbReference>
<dbReference type="PeptideAtlas" id="Q2QDF0"/>
<dbReference type="GeneID" id="654408"/>
<dbReference type="KEGG" id="ssc:654408"/>
<dbReference type="CTD" id="1774"/>
<dbReference type="InParanoid" id="Q2QDF0"/>
<dbReference type="OrthoDB" id="10061407at2759"/>
<dbReference type="Proteomes" id="UP000008227">
    <property type="component" value="Unplaced"/>
</dbReference>
<dbReference type="Proteomes" id="UP000314985">
    <property type="component" value="Unplaced"/>
</dbReference>
<dbReference type="Proteomes" id="UP000694570">
    <property type="component" value="Unplaced"/>
</dbReference>
<dbReference type="Proteomes" id="UP000694571">
    <property type="component" value="Unplaced"/>
</dbReference>
<dbReference type="Proteomes" id="UP000694720">
    <property type="component" value="Unplaced"/>
</dbReference>
<dbReference type="Proteomes" id="UP000694722">
    <property type="component" value="Unplaced"/>
</dbReference>
<dbReference type="Proteomes" id="UP000694723">
    <property type="component" value="Unplaced"/>
</dbReference>
<dbReference type="Proteomes" id="UP000694724">
    <property type="component" value="Unplaced"/>
</dbReference>
<dbReference type="Proteomes" id="UP000694725">
    <property type="component" value="Unplaced"/>
</dbReference>
<dbReference type="Proteomes" id="UP000694726">
    <property type="component" value="Unplaced"/>
</dbReference>
<dbReference type="Proteomes" id="UP000694727">
    <property type="component" value="Unplaced"/>
</dbReference>
<dbReference type="Proteomes" id="UP000694728">
    <property type="component" value="Unplaced"/>
</dbReference>
<dbReference type="GO" id="GO:0005783">
    <property type="term" value="C:endoplasmic reticulum"/>
    <property type="evidence" value="ECO:0007669"/>
    <property type="project" value="UniProtKB-SubCell"/>
</dbReference>
<dbReference type="GO" id="GO:0005634">
    <property type="term" value="C:nucleus"/>
    <property type="evidence" value="ECO:0000318"/>
    <property type="project" value="GO_Central"/>
</dbReference>
<dbReference type="GO" id="GO:0004530">
    <property type="term" value="F:deoxyribonuclease I activity"/>
    <property type="evidence" value="ECO:0000318"/>
    <property type="project" value="GO_Central"/>
</dbReference>
<dbReference type="GO" id="GO:0003677">
    <property type="term" value="F:DNA binding"/>
    <property type="evidence" value="ECO:0000318"/>
    <property type="project" value="GO_Central"/>
</dbReference>
<dbReference type="GO" id="GO:0006308">
    <property type="term" value="P:DNA catabolic process"/>
    <property type="evidence" value="ECO:0000318"/>
    <property type="project" value="GO_Central"/>
</dbReference>
<dbReference type="CDD" id="cd10282">
    <property type="entry name" value="DNase1"/>
    <property type="match status" value="1"/>
</dbReference>
<dbReference type="Gene3D" id="3.60.10.10">
    <property type="entry name" value="Endonuclease/exonuclease/phosphatase"/>
    <property type="match status" value="1"/>
</dbReference>
<dbReference type="InterPro" id="IPR016202">
    <property type="entry name" value="DNase_I"/>
</dbReference>
<dbReference type="InterPro" id="IPR033125">
    <property type="entry name" value="DNASE_I_2"/>
</dbReference>
<dbReference type="InterPro" id="IPR036691">
    <property type="entry name" value="Endo/exonu/phosph_ase_sf"/>
</dbReference>
<dbReference type="InterPro" id="IPR005135">
    <property type="entry name" value="Endo/exonuclease/phosphatase"/>
</dbReference>
<dbReference type="PANTHER" id="PTHR11371">
    <property type="entry name" value="DEOXYRIBONUCLEASE"/>
    <property type="match status" value="1"/>
</dbReference>
<dbReference type="PANTHER" id="PTHR11371:SF28">
    <property type="entry name" value="DEOXYRIBONUCLEASE-1-LIKE 1"/>
    <property type="match status" value="1"/>
</dbReference>
<dbReference type="Pfam" id="PF03372">
    <property type="entry name" value="Exo_endo_phos"/>
    <property type="match status" value="1"/>
</dbReference>
<dbReference type="PIRSF" id="PIRSF000988">
    <property type="entry name" value="DNase_I_euk"/>
    <property type="match status" value="1"/>
</dbReference>
<dbReference type="PRINTS" id="PR00130">
    <property type="entry name" value="DNASEI"/>
</dbReference>
<dbReference type="SMART" id="SM00476">
    <property type="entry name" value="DNaseIc"/>
    <property type="match status" value="1"/>
</dbReference>
<dbReference type="SUPFAM" id="SSF56219">
    <property type="entry name" value="DNase I-like"/>
    <property type="match status" value="1"/>
</dbReference>
<dbReference type="PROSITE" id="PS00918">
    <property type="entry name" value="DNASE_I_2"/>
    <property type="match status" value="1"/>
</dbReference>
<accession>Q2QDF0</accession>
<gene>
    <name type="primary">DNASE1L1</name>
</gene>